<gene>
    <name type="primary">Cdc25b</name>
</gene>
<sequence>MEVPPQKSAPGSALSTARVLGGIQRPRHLSGFGFGSDGLLGSPERAASSSPVTTLTQTMYNLAGLGSETPKTQVGSLSFQNRLTDLSLSRRTSECSLSSESSESSDAGLCMDSPSPMDPQTAERTFEQAIQAASRVIQKMQFTIKASVFASEAAGHSPVLQNITNSQALDSWEKDEAGYRAASSPGEDKENDGYIFKMPQKLPHSSSARALAEWASRREAFTQRPSSAPDLMCLTTDGKMDVEEASPVAQSSSLTPVERACEEDDGFVDILESDLKDDDMVPAGMENLISAPLVKKLDKEEEQDLIMFSKCQRLFRSPSMPCSVIRPILKRLERPHDRDVPVLSKRRKSGTPLEEQQLEEPKARVFRSKSLCHEIESILDSDHRGLIGDYSKAFLLQTVDGKHQDLKYISPETMVALLTGKFSNIVEKFVIVDCRYPYEYEGGHIKNAVNLPLEPDAETFLLKHPITPCNLDKRIILIFHCEFSSERGPRMCRFIRERDRAANDYPSLYYPEMYILKGGYKEFFPQHPNFCEPQDYRPMNHAAFRDELRNFRLKTRSWAGERSTTQLCSRLQDQ</sequence>
<evidence type="ECO:0000250" key="1">
    <source>
        <dbReference type="UniProtKB" id="P30304"/>
    </source>
</evidence>
<evidence type="ECO:0000250" key="2">
    <source>
        <dbReference type="UniProtKB" id="P30305"/>
    </source>
</evidence>
<evidence type="ECO:0000255" key="3">
    <source>
        <dbReference type="PROSITE-ProRule" id="PRU00173"/>
    </source>
</evidence>
<evidence type="ECO:0000256" key="4">
    <source>
        <dbReference type="SAM" id="MobiDB-lite"/>
    </source>
</evidence>
<evidence type="ECO:0000305" key="5"/>
<evidence type="ECO:0007744" key="6">
    <source>
    </source>
</evidence>
<comment type="function">
    <text evidence="2">Tyrosine protein phosphatase which functions as a dosage-dependent inducer of mitotic progression. Directly dephosphorylates CDK1 and stimulates its kinase activity. Required for G2/M phases of the cell cycle progression and abscission during cytokinesis in a ECT2-dependent manner. The three isoforms seem to have a different level of activity.</text>
</comment>
<comment type="catalytic activity">
    <reaction evidence="2">
        <text>O-phospho-L-tyrosyl-[protein] + H2O = L-tyrosyl-[protein] + phosphate</text>
        <dbReference type="Rhea" id="RHEA:10684"/>
        <dbReference type="Rhea" id="RHEA-COMP:10136"/>
        <dbReference type="Rhea" id="RHEA-COMP:20101"/>
        <dbReference type="ChEBI" id="CHEBI:15377"/>
        <dbReference type="ChEBI" id="CHEBI:43474"/>
        <dbReference type="ChEBI" id="CHEBI:46858"/>
        <dbReference type="ChEBI" id="CHEBI:61978"/>
        <dbReference type="EC" id="3.1.3.48"/>
    </reaction>
    <physiologicalReaction direction="left-to-right" evidence="2">
        <dbReference type="Rhea" id="RHEA:10685"/>
    </physiologicalReaction>
</comment>
<comment type="activity regulation">
    <text evidence="2">Stimulated by B-type cyclins.</text>
</comment>
<comment type="subunit">
    <text evidence="2">Interacts with MAPK14 and 14-3-3 proteins.</text>
</comment>
<comment type="subcellular location">
    <subcellularLocation>
        <location evidence="2">Cytoplasm</location>
        <location evidence="2">Cytoskeleton</location>
        <location evidence="2">Microtubule organizing center</location>
        <location evidence="2">Centrosome</location>
    </subcellularLocation>
    <subcellularLocation>
        <location evidence="2">Cytoplasm</location>
        <location evidence="2">Cytoskeleton</location>
        <location evidence="2">Spindle pole</location>
    </subcellularLocation>
</comment>
<comment type="PTM">
    <text evidence="2">Phosphorylated by BRSK1 in vitro. Phosphorylated by CHEK1, which inhibits the activity of this protein. Phosphorylation at Ser-349 by AURKA might locally participate in the control of the onset of mitosis. Phosphorylation by MELK at Ser-166 promotes localization to the centrosome and the spindle poles during mitosis. Phosphorylation at Ser-319 and Ser-370 by MAPK14 is required for binding to 14-3-3 proteins (By similarity).</text>
</comment>
<comment type="similarity">
    <text evidence="5">Belongs to the MPI phosphatase family.</text>
</comment>
<feature type="chain" id="PRO_0000198646" description="M-phase inducer phosphatase 2">
    <location>
        <begin position="1"/>
        <end position="574"/>
    </location>
</feature>
<feature type="domain" description="Rhodanese" evidence="3">
    <location>
        <begin position="425"/>
        <end position="532"/>
    </location>
</feature>
<feature type="region of interest" description="Disordered" evidence="4">
    <location>
        <begin position="31"/>
        <end position="51"/>
    </location>
</feature>
<feature type="region of interest" description="Disordered" evidence="4">
    <location>
        <begin position="90"/>
        <end position="110"/>
    </location>
</feature>
<feature type="region of interest" description="Disordered" evidence="4">
    <location>
        <begin position="339"/>
        <end position="359"/>
    </location>
</feature>
<feature type="compositionally biased region" description="Low complexity" evidence="4">
    <location>
        <begin position="90"/>
        <end position="105"/>
    </location>
</feature>
<feature type="active site" evidence="1">
    <location>
        <position position="481"/>
    </location>
</feature>
<feature type="modified residue" description="Phosphoserine" evidence="6">
    <location>
        <position position="42"/>
    </location>
</feature>
<feature type="modified residue" description="Phosphoserine; by MELK" evidence="2">
    <location>
        <position position="166"/>
    </location>
</feature>
<feature type="modified residue" description="Phosphoserine" evidence="2">
    <location>
        <position position="246"/>
    </location>
</feature>
<feature type="modified residue" description="Phosphoserine; by MAPKAPK2 and MELK" evidence="2">
    <location>
        <position position="319"/>
    </location>
</feature>
<feature type="modified residue" description="Phosphoserine; by MELK and MAPK14" evidence="2">
    <location>
        <position position="319"/>
    </location>
</feature>
<feature type="modified residue" description="Phosphoserine; by AURKA" evidence="2">
    <location>
        <position position="349"/>
    </location>
</feature>
<feature type="modified residue" description="Phosphoserine; by BRSK1 and MAPK14" evidence="2">
    <location>
        <position position="370"/>
    </location>
</feature>
<feature type="modified residue" description="Phosphoserine" evidence="2">
    <location>
        <position position="557"/>
    </location>
</feature>
<accession>P48966</accession>
<reference key="1">
    <citation type="journal article" date="1994" name="EMBO J.">
        <title>Cdc25A is a novel phosphatase functioning early in the cell cycle.</title>
        <authorList>
            <person name="Jinno S."/>
            <person name="Suto K."/>
            <person name="Nagata A."/>
            <person name="Igarashi M."/>
            <person name="Kanaoka Y."/>
            <person name="Nojima H."/>
            <person name="Okayama H."/>
        </authorList>
    </citation>
    <scope>NUCLEOTIDE SEQUENCE [MRNA]</scope>
    <source>
        <strain>NRK49F</strain>
    </source>
</reference>
<reference key="2">
    <citation type="journal article" date="2012" name="Nat. Commun.">
        <title>Quantitative maps of protein phosphorylation sites across 14 different rat organs and tissues.</title>
        <authorList>
            <person name="Lundby A."/>
            <person name="Secher A."/>
            <person name="Lage K."/>
            <person name="Nordsborg N.B."/>
            <person name="Dmytriyev A."/>
            <person name="Lundby C."/>
            <person name="Olsen J.V."/>
        </authorList>
    </citation>
    <scope>PHOSPHORYLATION [LARGE SCALE ANALYSIS] AT SER-42</scope>
    <scope>IDENTIFICATION BY MASS SPECTROMETRY [LARGE SCALE ANALYSIS]</scope>
</reference>
<proteinExistence type="evidence at protein level"/>
<organism>
    <name type="scientific">Rattus norvegicus</name>
    <name type="common">Rat</name>
    <dbReference type="NCBI Taxonomy" id="10116"/>
    <lineage>
        <taxon>Eukaryota</taxon>
        <taxon>Metazoa</taxon>
        <taxon>Chordata</taxon>
        <taxon>Craniata</taxon>
        <taxon>Vertebrata</taxon>
        <taxon>Euteleostomi</taxon>
        <taxon>Mammalia</taxon>
        <taxon>Eutheria</taxon>
        <taxon>Euarchontoglires</taxon>
        <taxon>Glires</taxon>
        <taxon>Rodentia</taxon>
        <taxon>Myomorpha</taxon>
        <taxon>Muroidea</taxon>
        <taxon>Muridae</taxon>
        <taxon>Murinae</taxon>
        <taxon>Rattus</taxon>
    </lineage>
</organism>
<keyword id="KW-0131">Cell cycle</keyword>
<keyword id="KW-0132">Cell division</keyword>
<keyword id="KW-0963">Cytoplasm</keyword>
<keyword id="KW-0206">Cytoskeleton</keyword>
<keyword id="KW-0378">Hydrolase</keyword>
<keyword id="KW-0498">Mitosis</keyword>
<keyword id="KW-0597">Phosphoprotein</keyword>
<keyword id="KW-0904">Protein phosphatase</keyword>
<keyword id="KW-1185">Reference proteome</keyword>
<dbReference type="EC" id="3.1.3.48" evidence="2"/>
<dbReference type="EMBL" id="D16237">
    <property type="protein sequence ID" value="BAA03762.1"/>
    <property type="molecule type" value="mRNA"/>
</dbReference>
<dbReference type="RefSeq" id="NP_598256.1">
    <property type="nucleotide sequence ID" value="NM_133572.1"/>
</dbReference>
<dbReference type="SMR" id="P48966"/>
<dbReference type="BioGRID" id="251111">
    <property type="interactions" value="2"/>
</dbReference>
<dbReference type="FunCoup" id="P48966">
    <property type="interactions" value="744"/>
</dbReference>
<dbReference type="STRING" id="10116.ENSRNOP00000051129"/>
<dbReference type="iPTMnet" id="P48966"/>
<dbReference type="PhosphoSitePlus" id="P48966"/>
<dbReference type="PaxDb" id="10116-ENSRNOP00000051129"/>
<dbReference type="GeneID" id="171103"/>
<dbReference type="KEGG" id="rno:171103"/>
<dbReference type="AGR" id="RGD:621500"/>
<dbReference type="CTD" id="994"/>
<dbReference type="RGD" id="621500">
    <property type="gene designation" value="Cdc25b"/>
</dbReference>
<dbReference type="eggNOG" id="KOG3772">
    <property type="taxonomic scope" value="Eukaryota"/>
</dbReference>
<dbReference type="InParanoid" id="P48966"/>
<dbReference type="PhylomeDB" id="P48966"/>
<dbReference type="Reactome" id="R-RNO-69273">
    <property type="pathway name" value="Cyclin A/B1/B2 associated events during G2/M transition"/>
</dbReference>
<dbReference type="Reactome" id="R-RNO-69656">
    <property type="pathway name" value="Cyclin A:Cdk2-associated events at S phase entry"/>
</dbReference>
<dbReference type="PRO" id="PR:P48966"/>
<dbReference type="Proteomes" id="UP000002494">
    <property type="component" value="Unplaced"/>
</dbReference>
<dbReference type="GO" id="GO:0005813">
    <property type="term" value="C:centrosome"/>
    <property type="evidence" value="ECO:0000250"/>
    <property type="project" value="UniProtKB"/>
</dbReference>
<dbReference type="GO" id="GO:0005737">
    <property type="term" value="C:cytoplasm"/>
    <property type="evidence" value="ECO:0000266"/>
    <property type="project" value="RGD"/>
</dbReference>
<dbReference type="GO" id="GO:0005634">
    <property type="term" value="C:nucleus"/>
    <property type="evidence" value="ECO:0000266"/>
    <property type="project" value="RGD"/>
</dbReference>
<dbReference type="GO" id="GO:0000922">
    <property type="term" value="C:spindle pole"/>
    <property type="evidence" value="ECO:0000250"/>
    <property type="project" value="UniProtKB"/>
</dbReference>
<dbReference type="GO" id="GO:0004721">
    <property type="term" value="F:phosphoprotein phosphatase activity"/>
    <property type="evidence" value="ECO:0000250"/>
    <property type="project" value="UniProtKB"/>
</dbReference>
<dbReference type="GO" id="GO:0019901">
    <property type="term" value="F:protein kinase binding"/>
    <property type="evidence" value="ECO:0000266"/>
    <property type="project" value="RGD"/>
</dbReference>
<dbReference type="GO" id="GO:0004725">
    <property type="term" value="F:protein tyrosine phosphatase activity"/>
    <property type="evidence" value="ECO:0000318"/>
    <property type="project" value="GO_Central"/>
</dbReference>
<dbReference type="GO" id="GO:0051301">
    <property type="term" value="P:cell division"/>
    <property type="evidence" value="ECO:0007669"/>
    <property type="project" value="UniProtKB-KW"/>
</dbReference>
<dbReference type="GO" id="GO:0007144">
    <property type="term" value="P:female meiosis I"/>
    <property type="evidence" value="ECO:0000266"/>
    <property type="project" value="RGD"/>
</dbReference>
<dbReference type="GO" id="GO:0000086">
    <property type="term" value="P:G2/M transition of mitotic cell cycle"/>
    <property type="evidence" value="ECO:0000318"/>
    <property type="project" value="GO_Central"/>
</dbReference>
<dbReference type="GO" id="GO:0001556">
    <property type="term" value="P:oocyte maturation"/>
    <property type="evidence" value="ECO:0000266"/>
    <property type="project" value="RGD"/>
</dbReference>
<dbReference type="GO" id="GO:0032467">
    <property type="term" value="P:positive regulation of cytokinesis"/>
    <property type="evidence" value="ECO:0000266"/>
    <property type="project" value="RGD"/>
</dbReference>
<dbReference type="GO" id="GO:0010971">
    <property type="term" value="P:positive regulation of G2/M transition of mitotic cell cycle"/>
    <property type="evidence" value="ECO:0000250"/>
    <property type="project" value="UniProtKB"/>
</dbReference>
<dbReference type="GO" id="GO:0110032">
    <property type="term" value="P:positive regulation of G2/MI transition of meiotic cell cycle"/>
    <property type="evidence" value="ECO:0000318"/>
    <property type="project" value="GO_Central"/>
</dbReference>
<dbReference type="GO" id="GO:0045931">
    <property type="term" value="P:positive regulation of mitotic cell cycle"/>
    <property type="evidence" value="ECO:0000266"/>
    <property type="project" value="RGD"/>
</dbReference>
<dbReference type="CDD" id="cd01530">
    <property type="entry name" value="Cdc25"/>
    <property type="match status" value="1"/>
</dbReference>
<dbReference type="FunFam" id="3.40.250.10:FF:000006">
    <property type="entry name" value="M-phase inducer phosphatase 2"/>
    <property type="match status" value="1"/>
</dbReference>
<dbReference type="Gene3D" id="3.40.250.10">
    <property type="entry name" value="Rhodanese-like domain"/>
    <property type="match status" value="1"/>
</dbReference>
<dbReference type="InterPro" id="IPR000751">
    <property type="entry name" value="MPI_Phosphatase"/>
</dbReference>
<dbReference type="InterPro" id="IPR001763">
    <property type="entry name" value="Rhodanese-like_dom"/>
</dbReference>
<dbReference type="InterPro" id="IPR036873">
    <property type="entry name" value="Rhodanese-like_dom_sf"/>
</dbReference>
<dbReference type="PANTHER" id="PTHR10828:SF48">
    <property type="entry name" value="M-PHASE INDUCER PHOSPHATASE 2"/>
    <property type="match status" value="1"/>
</dbReference>
<dbReference type="PANTHER" id="PTHR10828">
    <property type="entry name" value="M-PHASE INDUCER PHOSPHATASE DUAL SPECIFICITY PHOSPHATASE CDC25"/>
    <property type="match status" value="1"/>
</dbReference>
<dbReference type="Pfam" id="PF06617">
    <property type="entry name" value="M-inducer_phosp"/>
    <property type="match status" value="1"/>
</dbReference>
<dbReference type="Pfam" id="PF00581">
    <property type="entry name" value="Rhodanese"/>
    <property type="match status" value="1"/>
</dbReference>
<dbReference type="PRINTS" id="PR00716">
    <property type="entry name" value="MPIPHPHTASE"/>
</dbReference>
<dbReference type="SMART" id="SM00450">
    <property type="entry name" value="RHOD"/>
    <property type="match status" value="1"/>
</dbReference>
<dbReference type="SUPFAM" id="SSF52821">
    <property type="entry name" value="Rhodanese/Cell cycle control phosphatase"/>
    <property type="match status" value="1"/>
</dbReference>
<dbReference type="PROSITE" id="PS50206">
    <property type="entry name" value="RHODANESE_3"/>
    <property type="match status" value="1"/>
</dbReference>
<name>MPIP2_RAT</name>
<protein>
    <recommendedName>
        <fullName>M-phase inducer phosphatase 2</fullName>
        <ecNumber evidence="2">3.1.3.48</ecNumber>
    </recommendedName>
    <alternativeName>
        <fullName>Dual specificity phosphatase Cdc25B</fullName>
    </alternativeName>
</protein>